<comment type="similarity">
    <text evidence="2">Belongs to the herpesviridae US22 family.</text>
</comment>
<evidence type="ECO:0000256" key="1">
    <source>
        <dbReference type="SAM" id="MobiDB-lite"/>
    </source>
</evidence>
<evidence type="ECO:0000305" key="2"/>
<name>UL29_HCMVA</name>
<organism>
    <name type="scientific">Human cytomegalovirus (strain AD169)</name>
    <name type="common">HHV-5</name>
    <name type="synonym">Human herpesvirus 5</name>
    <dbReference type="NCBI Taxonomy" id="10360"/>
    <lineage>
        <taxon>Viruses</taxon>
        <taxon>Duplodnaviria</taxon>
        <taxon>Heunggongvirae</taxon>
        <taxon>Peploviricota</taxon>
        <taxon>Herviviricetes</taxon>
        <taxon>Herpesvirales</taxon>
        <taxon>Orthoherpesviridae</taxon>
        <taxon>Betaherpesvirinae</taxon>
        <taxon>Cytomegalovirus</taxon>
        <taxon>Cytomegalovirus humanbeta5</taxon>
        <taxon>Human cytomegalovirus</taxon>
    </lineage>
</organism>
<feature type="chain" id="PRO_0000116317" description="Uncharacterized protein UL29">
    <location>
        <begin position="1"/>
        <end position="360"/>
    </location>
</feature>
<feature type="region of interest" description="Disordered" evidence="1">
    <location>
        <begin position="1"/>
        <end position="33"/>
    </location>
</feature>
<keyword id="KW-1185">Reference proteome</keyword>
<dbReference type="EMBL" id="X17403">
    <property type="protein sequence ID" value="CAA35428.1"/>
    <property type="molecule type" value="Genomic_DNA"/>
</dbReference>
<dbReference type="EMBL" id="BK000394">
    <property type="status" value="NOT_ANNOTATED_CDS"/>
    <property type="molecule type" value="Genomic_DNA"/>
</dbReference>
<dbReference type="PIR" id="S09792">
    <property type="entry name" value="S09792"/>
</dbReference>
<dbReference type="Proteomes" id="UP000008991">
    <property type="component" value="Segment"/>
</dbReference>
<dbReference type="Proteomes" id="UP000008992">
    <property type="component" value="Segment"/>
</dbReference>
<dbReference type="InterPro" id="IPR003360">
    <property type="entry name" value="US22-like"/>
</dbReference>
<dbReference type="Pfam" id="PF02393">
    <property type="entry name" value="US22"/>
    <property type="match status" value="2"/>
</dbReference>
<organismHost>
    <name type="scientific">Homo sapiens</name>
    <name type="common">Human</name>
    <dbReference type="NCBI Taxonomy" id="9606"/>
</organismHost>
<sequence>MSGRRKGCSAATASSSSSSPPSRLPPLPGHARRPRRKRCLVPEVFCTRDLADLCVRRDYEGLRRYLRRFEGSCVSLGWPSQCIYVVGGEHSPHSLTEIDLEHCQNDFFGEFRALHLIGTVSHATCRYQVFVDAYGAVFAYDAQEDCLYELASDLAGFFAKGMIRCDPVHESICARLQPNVPLVHPDHRAELCRRSRASARGRYLRSLLAFRELLACEDTAARCAYVEAHREAQLTLIWPEKHSLVLRTARDLGLSASMLRRFQRSLYTREPVMPLGEIEGAEDKTFFHRVRILCGDTGTVYAALVGQDKLVRLARDLRGFVRVGLALLIDDFRYESIGPVDRSSLYEANPELRLPFKKRR</sequence>
<proteinExistence type="inferred from homology"/>
<reference key="1">
    <citation type="journal article" date="1990" name="Curr. Top. Microbiol. Immunol.">
        <title>Analysis of the protein-coding content of the sequence of human cytomegalovirus strain AD169.</title>
        <authorList>
            <person name="Chee M.S."/>
            <person name="Bankier A.T."/>
            <person name="Beck S."/>
            <person name="Bohni R."/>
            <person name="Brown C.M."/>
            <person name="Cerny R."/>
            <person name="Horsnell T."/>
            <person name="Hutchison C.A. III"/>
            <person name="Kouzarides T."/>
            <person name="Martignetti J.A."/>
            <person name="Preddie E."/>
            <person name="Satchwell S.C."/>
            <person name="Tomlinson P."/>
            <person name="Weston K.M."/>
            <person name="Barrell B.G."/>
        </authorList>
    </citation>
    <scope>NUCLEOTIDE SEQUENCE [LARGE SCALE GENOMIC DNA]</scope>
</reference>
<reference key="2">
    <citation type="journal article" date="2003" name="J. Gen. Virol.">
        <title>The human cytomegalovirus genome revisited: comparison with the chimpanzee cytomegalovirus genome.</title>
        <authorList>
            <person name="Davison A.J."/>
            <person name="Dolan A."/>
            <person name="Akter P."/>
            <person name="Addison C."/>
            <person name="Dargan D.J."/>
            <person name="Alcendor D.J."/>
            <person name="McGeoch D.J."/>
            <person name="Hayward G.S."/>
        </authorList>
    </citation>
    <scope>GENOME REANNOTATION</scope>
</reference>
<reference key="3">
    <citation type="journal article" date="2003" name="J. Gen. Virol.">
        <authorList>
            <person name="Davison A.J."/>
            <person name="Dolan A."/>
            <person name="Akter P."/>
            <person name="Addison C."/>
            <person name="Dargan D.J."/>
            <person name="Alcendor D.J."/>
            <person name="McGeoch D.J."/>
            <person name="Hayward G.S."/>
        </authorList>
    </citation>
    <scope>ERRATUM OF PUBMED:12533697</scope>
</reference>
<accession>P16764</accession>
<accession>Q7M6Q4</accession>
<protein>
    <recommendedName>
        <fullName>Uncharacterized protein UL29</fullName>
    </recommendedName>
</protein>
<gene>
    <name type="primary">UL29</name>
</gene>